<name>UNG_GAHVM</name>
<accession>Q9E6R2</accession>
<dbReference type="EC" id="3.2.2.27" evidence="1"/>
<dbReference type="EMBL" id="AF243438">
    <property type="protein sequence ID" value="AAG14194.1"/>
    <property type="molecule type" value="Genomic_DNA"/>
</dbReference>
<dbReference type="RefSeq" id="YP_001033930.1">
    <property type="nucleotide sequence ID" value="NC_002229.3"/>
</dbReference>
<dbReference type="SMR" id="Q9E6R2"/>
<dbReference type="GeneID" id="4811475"/>
<dbReference type="KEGG" id="vg:4811475"/>
<dbReference type="Proteomes" id="UP000008072">
    <property type="component" value="Segment"/>
</dbReference>
<dbReference type="GO" id="GO:0042025">
    <property type="term" value="C:host cell nucleus"/>
    <property type="evidence" value="ECO:0007669"/>
    <property type="project" value="UniProtKB-SubCell"/>
</dbReference>
<dbReference type="GO" id="GO:0004844">
    <property type="term" value="F:uracil DNA N-glycosylase activity"/>
    <property type="evidence" value="ECO:0007669"/>
    <property type="project" value="UniProtKB-EC"/>
</dbReference>
<dbReference type="GO" id="GO:0097510">
    <property type="term" value="P:base-excision repair, AP site formation via deaminated base removal"/>
    <property type="evidence" value="ECO:0007669"/>
    <property type="project" value="TreeGrafter"/>
</dbReference>
<dbReference type="CDD" id="cd10027">
    <property type="entry name" value="UDG-F1-like"/>
    <property type="match status" value="1"/>
</dbReference>
<dbReference type="Gene3D" id="3.40.470.10">
    <property type="entry name" value="Uracil-DNA glycosylase-like domain"/>
    <property type="match status" value="1"/>
</dbReference>
<dbReference type="HAMAP" id="MF_00148">
    <property type="entry name" value="UDG"/>
    <property type="match status" value="1"/>
</dbReference>
<dbReference type="InterPro" id="IPR002043">
    <property type="entry name" value="UDG_fam1"/>
</dbReference>
<dbReference type="InterPro" id="IPR018085">
    <property type="entry name" value="Ura-DNA_Glyclase_AS"/>
</dbReference>
<dbReference type="InterPro" id="IPR005122">
    <property type="entry name" value="Uracil-DNA_glycosylase-like"/>
</dbReference>
<dbReference type="InterPro" id="IPR036895">
    <property type="entry name" value="Uracil-DNA_glycosylase-like_sf"/>
</dbReference>
<dbReference type="NCBIfam" id="NF003589">
    <property type="entry name" value="PRK05254.1-2"/>
    <property type="match status" value="1"/>
</dbReference>
<dbReference type="NCBIfam" id="NF003592">
    <property type="entry name" value="PRK05254.1-5"/>
    <property type="match status" value="1"/>
</dbReference>
<dbReference type="NCBIfam" id="TIGR00628">
    <property type="entry name" value="ung"/>
    <property type="match status" value="1"/>
</dbReference>
<dbReference type="PANTHER" id="PTHR11264">
    <property type="entry name" value="URACIL-DNA GLYCOSYLASE"/>
    <property type="match status" value="1"/>
</dbReference>
<dbReference type="PANTHER" id="PTHR11264:SF0">
    <property type="entry name" value="URACIL-DNA GLYCOSYLASE"/>
    <property type="match status" value="1"/>
</dbReference>
<dbReference type="Pfam" id="PF03167">
    <property type="entry name" value="UDG"/>
    <property type="match status" value="1"/>
</dbReference>
<dbReference type="SMART" id="SM00986">
    <property type="entry name" value="UDG"/>
    <property type="match status" value="1"/>
</dbReference>
<dbReference type="SMART" id="SM00987">
    <property type="entry name" value="UreE_C"/>
    <property type="match status" value="1"/>
</dbReference>
<dbReference type="SUPFAM" id="SSF52141">
    <property type="entry name" value="Uracil-DNA glycosylase-like"/>
    <property type="match status" value="1"/>
</dbReference>
<dbReference type="PROSITE" id="PS00130">
    <property type="entry name" value="U_DNA_GLYCOSYLASE"/>
    <property type="match status" value="1"/>
</dbReference>
<sequence length="313" mass="34805">MAQLDLTGLTETSKMIVGECHVELKRCAEPPLAADEPMPKKCRRPAGPPKGFISTRGDTSPSSDNNHIHSIQSLTNGDSCVQPWDIIANAYNIHENWKQLLLPELCCLRGSEILAEYERRAITEEVYPPKMDIFAWTRYCAPESVKAVIVGQDPYANPGQAHGLAFSVKQGVAIPPSLKNILLAVKACYPSADLGNHGCLEAWSKRGVLLLNSVLTVKRGDPGSHHSVGWQFFIRNILRRLSSTTRGIVFMLWGAQAQTMYFQTDYDDRHLVLKYSHPSPLSRKPFATCTHFKEANDFLSKIGRGCIDWSLTA</sequence>
<keyword id="KW-0227">DNA damage</keyword>
<keyword id="KW-0234">DNA repair</keyword>
<keyword id="KW-1048">Host nucleus</keyword>
<keyword id="KW-0378">Hydrolase</keyword>
<keyword id="KW-1185">Reference proteome</keyword>
<gene>
    <name type="primary">MDV014</name>
</gene>
<protein>
    <recommendedName>
        <fullName evidence="1">Uracil-DNA glycosylase</fullName>
        <shortName evidence="1">UDG</shortName>
        <ecNumber evidence="1">3.2.2.27</ecNumber>
    </recommendedName>
    <alternativeName>
        <fullName evidence="1">UNG</fullName>
    </alternativeName>
</protein>
<organismHost>
    <name type="scientific">Gallus gallus</name>
    <name type="common">Chicken</name>
    <dbReference type="NCBI Taxonomy" id="9031"/>
</organismHost>
<proteinExistence type="inferred from homology"/>
<feature type="chain" id="PRO_0000406513" description="Uracil-DNA glycosylase">
    <location>
        <begin position="1"/>
        <end position="313"/>
    </location>
</feature>
<feature type="region of interest" description="Disordered" evidence="2">
    <location>
        <begin position="35"/>
        <end position="68"/>
    </location>
</feature>
<feature type="compositionally biased region" description="Polar residues" evidence="2">
    <location>
        <begin position="56"/>
        <end position="68"/>
    </location>
</feature>
<feature type="active site" description="Proton acceptor" evidence="1">
    <location>
        <position position="153"/>
    </location>
</feature>
<organism>
    <name type="scientific">Gallid herpesvirus 2 (strain Chicken/Md5/ATCC VR-987)</name>
    <name type="common">GaHV-2</name>
    <name type="synonym">Marek's disease herpesvirus type 1</name>
    <dbReference type="NCBI Taxonomy" id="10389"/>
    <lineage>
        <taxon>Viruses</taxon>
        <taxon>Duplodnaviria</taxon>
        <taxon>Heunggongvirae</taxon>
        <taxon>Peploviricota</taxon>
        <taxon>Herviviricetes</taxon>
        <taxon>Herpesvirales</taxon>
        <taxon>Orthoherpesviridae</taxon>
        <taxon>Alphaherpesvirinae</taxon>
        <taxon>Mardivirus</taxon>
        <taxon>Mardivirus gallidalpha2</taxon>
        <taxon>Gallid alphaherpesvirus 2</taxon>
    </lineage>
</organism>
<reference key="1">
    <citation type="journal article" date="2000" name="J. Virol.">
        <title>The genome of a very virulent Marek's disease virus.</title>
        <authorList>
            <person name="Tulman E.R."/>
            <person name="Afonso C.L."/>
            <person name="Lu Z."/>
            <person name="Zsak L."/>
            <person name="Rock D.L."/>
            <person name="Kutish G.F."/>
        </authorList>
    </citation>
    <scope>NUCLEOTIDE SEQUENCE [LARGE SCALE GENOMIC DNA]</scope>
</reference>
<evidence type="ECO:0000255" key="1">
    <source>
        <dbReference type="HAMAP-Rule" id="MF_04046"/>
    </source>
</evidence>
<evidence type="ECO:0000256" key="2">
    <source>
        <dbReference type="SAM" id="MobiDB-lite"/>
    </source>
</evidence>
<comment type="function">
    <text evidence="1">Excises uracil residues from the DNA which can arise as a result of misincorporation of dUMP residues by DNA polymerase or deamination of cytosines. Therefore may reduce deleterious uracil incorporation into the viral genome, particularly in terminally differentiated cells which lack DNA repair enzymes.</text>
</comment>
<comment type="catalytic activity">
    <reaction evidence="1">
        <text>Hydrolyzes single-stranded DNA or mismatched double-stranded DNA and polynucleotides, releasing free uracil.</text>
        <dbReference type="EC" id="3.2.2.27"/>
    </reaction>
</comment>
<comment type="subcellular location">
    <subcellularLocation>
        <location evidence="1">Host nucleus</location>
    </subcellularLocation>
</comment>
<comment type="similarity">
    <text evidence="1">Belongs to the uracil-DNA glycosylase (UDG) superfamily. UNG family.</text>
</comment>